<organismHost>
    <name type="scientific">Bos taurus</name>
    <name type="common">Bovine</name>
    <dbReference type="NCBI Taxonomy" id="9913"/>
</organismHost>
<name>A375_VACCW</name>
<comment type="similarity">
    <text evidence="1">Belongs to the orthopoxviruses A37.5 protein family.</text>
</comment>
<dbReference type="EMBL" id="AY243312">
    <property type="protein sequence ID" value="AAO89440.1"/>
    <property type="molecule type" value="Genomic_DNA"/>
</dbReference>
<dbReference type="RefSeq" id="YP_233043.1">
    <property type="nucleotide sequence ID" value="NC_006998.1"/>
</dbReference>
<dbReference type="DNASU" id="3707691"/>
<dbReference type="GeneID" id="3707691"/>
<dbReference type="KEGG" id="vg:3707691"/>
<dbReference type="Proteomes" id="UP000000344">
    <property type="component" value="Genome"/>
</dbReference>
<reference key="1">
    <citation type="submission" date="2003-02" db="EMBL/GenBank/DDBJ databases">
        <title>Sequencing of the coding region of Vaccinia-WR to an average 9-fold redundancy and an error rate of 0.16/10kb.</title>
        <authorList>
            <person name="Esposito J.J."/>
            <person name="Frace A.M."/>
            <person name="Sammons S.A."/>
            <person name="Olsen-Rasmussen M."/>
            <person name="Osborne J."/>
            <person name="Wohlhueter R."/>
        </authorList>
    </citation>
    <scope>NUCLEOTIDE SEQUENCE [LARGE SCALE GENOMIC DNA]</scope>
</reference>
<protein>
    <recommendedName>
        <fullName>Uncharacterized protein A37.5</fullName>
    </recommendedName>
</protein>
<organism>
    <name type="scientific">Vaccinia virus (strain Western Reserve)</name>
    <name type="common">VACV</name>
    <name type="synonym">Vaccinia virus (strain WR)</name>
    <dbReference type="NCBI Taxonomy" id="10254"/>
    <lineage>
        <taxon>Viruses</taxon>
        <taxon>Varidnaviria</taxon>
        <taxon>Bamfordvirae</taxon>
        <taxon>Nucleocytoviricota</taxon>
        <taxon>Pokkesviricetes</taxon>
        <taxon>Chitovirales</taxon>
        <taxon>Poxviridae</taxon>
        <taxon>Chordopoxvirinae</taxon>
        <taxon>Orthopoxvirus</taxon>
        <taxon>Vaccinia virus</taxon>
    </lineage>
</organism>
<proteinExistence type="inferred from homology"/>
<evidence type="ECO:0000305" key="1"/>
<keyword id="KW-1185">Reference proteome</keyword>
<gene>
    <name type="primary">A37.5</name>
    <name type="ordered locus">VACWR161</name>
</gene>
<feature type="chain" id="PRO_0000412175" description="Uncharacterized protein A37.5">
    <location>
        <begin position="1"/>
        <end position="62"/>
    </location>
</feature>
<accession>Q80HU3</accession>
<sequence>MDSFSSLFMKLCCISTDKTGSKKSDKKNKNKIKDYMEHDYYKITIVPGSSSTSTSSWYYTHA</sequence>